<dbReference type="EC" id="1.4.99.-" evidence="1"/>
<dbReference type="EMBL" id="CP000462">
    <property type="protein sequence ID" value="ABK37305.1"/>
    <property type="molecule type" value="Genomic_DNA"/>
</dbReference>
<dbReference type="RefSeq" id="WP_011705831.1">
    <property type="nucleotide sequence ID" value="NC_008570.1"/>
</dbReference>
<dbReference type="RefSeq" id="YP_856492.1">
    <property type="nucleotide sequence ID" value="NC_008570.1"/>
</dbReference>
<dbReference type="SMR" id="A0KJP1"/>
<dbReference type="STRING" id="380703.AHA_1961"/>
<dbReference type="EnsemblBacteria" id="ABK37305">
    <property type="protein sequence ID" value="ABK37305"/>
    <property type="gene ID" value="AHA_1961"/>
</dbReference>
<dbReference type="GeneID" id="4490631"/>
<dbReference type="KEGG" id="aha:AHA_1961"/>
<dbReference type="PATRIC" id="fig|380703.7.peg.1977"/>
<dbReference type="eggNOG" id="COG0665">
    <property type="taxonomic scope" value="Bacteria"/>
</dbReference>
<dbReference type="HOGENOM" id="CLU_007884_9_2_6"/>
<dbReference type="OrthoDB" id="9805337at2"/>
<dbReference type="UniPathway" id="UPA00043">
    <property type="reaction ID" value="UER00498"/>
</dbReference>
<dbReference type="Proteomes" id="UP000000756">
    <property type="component" value="Chromosome"/>
</dbReference>
<dbReference type="GO" id="GO:0005737">
    <property type="term" value="C:cytoplasm"/>
    <property type="evidence" value="ECO:0007669"/>
    <property type="project" value="TreeGrafter"/>
</dbReference>
<dbReference type="GO" id="GO:0005886">
    <property type="term" value="C:plasma membrane"/>
    <property type="evidence" value="ECO:0007669"/>
    <property type="project" value="TreeGrafter"/>
</dbReference>
<dbReference type="GO" id="GO:0008718">
    <property type="term" value="F:D-amino-acid dehydrogenase activity"/>
    <property type="evidence" value="ECO:0007669"/>
    <property type="project" value="UniProtKB-UniRule"/>
</dbReference>
<dbReference type="GO" id="GO:0055130">
    <property type="term" value="P:D-alanine catabolic process"/>
    <property type="evidence" value="ECO:0007669"/>
    <property type="project" value="UniProtKB-UniPathway"/>
</dbReference>
<dbReference type="FunFam" id="3.50.50.60:FF:000020">
    <property type="entry name" value="D-amino acid dehydrogenase"/>
    <property type="match status" value="1"/>
</dbReference>
<dbReference type="Gene3D" id="3.30.9.10">
    <property type="entry name" value="D-Amino Acid Oxidase, subunit A, domain 2"/>
    <property type="match status" value="1"/>
</dbReference>
<dbReference type="Gene3D" id="3.50.50.60">
    <property type="entry name" value="FAD/NAD(P)-binding domain"/>
    <property type="match status" value="2"/>
</dbReference>
<dbReference type="HAMAP" id="MF_01202">
    <property type="entry name" value="DadA"/>
    <property type="match status" value="1"/>
</dbReference>
<dbReference type="InterPro" id="IPR023080">
    <property type="entry name" value="DadA"/>
</dbReference>
<dbReference type="InterPro" id="IPR006076">
    <property type="entry name" value="FAD-dep_OxRdtase"/>
</dbReference>
<dbReference type="InterPro" id="IPR036188">
    <property type="entry name" value="FAD/NAD-bd_sf"/>
</dbReference>
<dbReference type="NCBIfam" id="NF001933">
    <property type="entry name" value="PRK00711.1"/>
    <property type="match status" value="1"/>
</dbReference>
<dbReference type="PANTHER" id="PTHR13847:SF280">
    <property type="entry name" value="D-AMINO ACID DEHYDROGENASE"/>
    <property type="match status" value="1"/>
</dbReference>
<dbReference type="PANTHER" id="PTHR13847">
    <property type="entry name" value="SARCOSINE DEHYDROGENASE-RELATED"/>
    <property type="match status" value="1"/>
</dbReference>
<dbReference type="Pfam" id="PF01266">
    <property type="entry name" value="DAO"/>
    <property type="match status" value="1"/>
</dbReference>
<dbReference type="SUPFAM" id="SSF54373">
    <property type="entry name" value="FAD-linked reductases, C-terminal domain"/>
    <property type="match status" value="1"/>
</dbReference>
<dbReference type="SUPFAM" id="SSF51905">
    <property type="entry name" value="FAD/NAD(P)-binding domain"/>
    <property type="match status" value="1"/>
</dbReference>
<comment type="function">
    <text evidence="1">Oxidative deamination of D-amino acids.</text>
</comment>
<comment type="catalytic activity">
    <reaction evidence="1">
        <text>a D-alpha-amino acid + A + H2O = a 2-oxocarboxylate + AH2 + NH4(+)</text>
        <dbReference type="Rhea" id="RHEA:18125"/>
        <dbReference type="ChEBI" id="CHEBI:13193"/>
        <dbReference type="ChEBI" id="CHEBI:15377"/>
        <dbReference type="ChEBI" id="CHEBI:17499"/>
        <dbReference type="ChEBI" id="CHEBI:28938"/>
        <dbReference type="ChEBI" id="CHEBI:35179"/>
        <dbReference type="ChEBI" id="CHEBI:59871"/>
    </reaction>
</comment>
<comment type="cofactor">
    <cofactor evidence="1">
        <name>FAD</name>
        <dbReference type="ChEBI" id="CHEBI:57692"/>
    </cofactor>
</comment>
<comment type="pathway">
    <text>Amino-acid degradation; D-alanine degradation; NH(3) and pyruvate from D-alanine: step 1/1.</text>
</comment>
<comment type="similarity">
    <text evidence="1">Belongs to the DadA oxidoreductase family.</text>
</comment>
<gene>
    <name evidence="1" type="primary">dadA</name>
    <name type="ordered locus">AHA_1961</name>
</gene>
<organism>
    <name type="scientific">Aeromonas hydrophila subsp. hydrophila (strain ATCC 7966 / DSM 30187 / BCRC 13018 / CCUG 14551 / JCM 1027 / KCTC 2358 / NCIMB 9240 / NCTC 8049)</name>
    <dbReference type="NCBI Taxonomy" id="380703"/>
    <lineage>
        <taxon>Bacteria</taxon>
        <taxon>Pseudomonadati</taxon>
        <taxon>Pseudomonadota</taxon>
        <taxon>Gammaproteobacteria</taxon>
        <taxon>Aeromonadales</taxon>
        <taxon>Aeromonadaceae</taxon>
        <taxon>Aeromonas</taxon>
    </lineage>
</organism>
<protein>
    <recommendedName>
        <fullName evidence="1">D-amino acid dehydrogenase</fullName>
        <ecNumber evidence="1">1.4.99.-</ecNumber>
    </recommendedName>
</protein>
<accession>A0KJP1</accession>
<feature type="chain" id="PRO_1000066067" description="D-amino acid dehydrogenase">
    <location>
        <begin position="1"/>
        <end position="417"/>
    </location>
</feature>
<feature type="binding site" evidence="1">
    <location>
        <begin position="3"/>
        <end position="17"/>
    </location>
    <ligand>
        <name>FAD</name>
        <dbReference type="ChEBI" id="CHEBI:57692"/>
    </ligand>
</feature>
<reference key="1">
    <citation type="journal article" date="2006" name="J. Bacteriol.">
        <title>Genome sequence of Aeromonas hydrophila ATCC 7966T: jack of all trades.</title>
        <authorList>
            <person name="Seshadri R."/>
            <person name="Joseph S.W."/>
            <person name="Chopra A.K."/>
            <person name="Sha J."/>
            <person name="Shaw J."/>
            <person name="Graf J."/>
            <person name="Haft D.H."/>
            <person name="Wu M."/>
            <person name="Ren Q."/>
            <person name="Rosovitz M.J."/>
            <person name="Madupu R."/>
            <person name="Tallon L."/>
            <person name="Kim M."/>
            <person name="Jin S."/>
            <person name="Vuong H."/>
            <person name="Stine O.C."/>
            <person name="Ali A."/>
            <person name="Horneman A.J."/>
            <person name="Heidelberg J.F."/>
        </authorList>
    </citation>
    <scope>NUCLEOTIDE SEQUENCE [LARGE SCALE GENOMIC DNA]</scope>
    <source>
        <strain>ATCC 7966 / DSM 30187 / BCRC 13018 / CCUG 14551 / JCM 1027 / KCTC 2358 / NCIMB 9240 / NCTC 8049</strain>
    </source>
</reference>
<evidence type="ECO:0000255" key="1">
    <source>
        <dbReference type="HAMAP-Rule" id="MF_01202"/>
    </source>
</evidence>
<name>DADA_AERHH</name>
<sequence>MDIVVLGGGVVGVTSAWYLAKAGHKVTLLERRDGVALETSHANAGQISPGYAAPWAAPGIPLKAAKWLLQKHAPFTVRPTSDPFQLRWMLKMFANCTPAAYAVNKGRMVRLAEYSRDCMKLLRDELSIDYEGRQLGTLQLFRSQAQLDASKRDIEVLEEYGVPYQSLDAAGCEGAEPALARVRGKIVGGLRLPGDETGDCFRFTKAMAAEAQRLGVKFVFNCAIDEIELAQGRAVAVRAGEQRFKADAIVCALGSYATGFLRPLGLDLPVYPVKGYSLTLPMINAEASPRSTVLDETYKVAITRFDERIRVGGMAELSGYNLALNPKRHDTLAMVVGDLFPEGGDISRADFWTGLRPMTPDGTPLVGPSPIPGLWLNTGHGTLGWTMAAGSGQLLCDLISGSDTAISDEGLTLARYG</sequence>
<keyword id="KW-0274">FAD</keyword>
<keyword id="KW-0285">Flavoprotein</keyword>
<keyword id="KW-0560">Oxidoreductase</keyword>
<keyword id="KW-1185">Reference proteome</keyword>
<proteinExistence type="inferred from homology"/>